<dbReference type="EMBL" id="L77117">
    <property type="protein sequence ID" value="AAB98935.1"/>
    <property type="molecule type" value="Genomic_DNA"/>
</dbReference>
<dbReference type="PIR" id="E64416">
    <property type="entry name" value="E64416"/>
</dbReference>
<dbReference type="FunCoup" id="Q58343">
    <property type="interactions" value="50"/>
</dbReference>
<dbReference type="STRING" id="243232.MJ_0933"/>
<dbReference type="PaxDb" id="243232-MJ_0933"/>
<dbReference type="DNASU" id="1451823"/>
<dbReference type="EnsemblBacteria" id="AAB98935">
    <property type="protein sequence ID" value="AAB98935"/>
    <property type="gene ID" value="MJ_0933"/>
</dbReference>
<dbReference type="KEGG" id="mja:MJ_0933"/>
<dbReference type="eggNOG" id="arCOG02245">
    <property type="taxonomic scope" value="Archaea"/>
</dbReference>
<dbReference type="HOGENOM" id="CLU_036918_2_2_2"/>
<dbReference type="InParanoid" id="Q58343"/>
<dbReference type="PhylomeDB" id="Q58343"/>
<dbReference type="Proteomes" id="UP000000805">
    <property type="component" value="Chromosome"/>
</dbReference>
<dbReference type="GO" id="GO:0016020">
    <property type="term" value="C:membrane"/>
    <property type="evidence" value="ECO:0000318"/>
    <property type="project" value="GO_Central"/>
</dbReference>
<dbReference type="GO" id="GO:0005886">
    <property type="term" value="C:plasma membrane"/>
    <property type="evidence" value="ECO:0007669"/>
    <property type="project" value="UniProtKB-SubCell"/>
</dbReference>
<dbReference type="InterPro" id="IPR002794">
    <property type="entry name" value="DUF92_TMEM19"/>
</dbReference>
<dbReference type="NCBIfam" id="TIGR00297">
    <property type="entry name" value="TIGR00297 family protein"/>
    <property type="match status" value="1"/>
</dbReference>
<dbReference type="PANTHER" id="PTHR13353">
    <property type="entry name" value="TRANSMEMBRANE PROTEIN 19"/>
    <property type="match status" value="1"/>
</dbReference>
<dbReference type="PANTHER" id="PTHR13353:SF5">
    <property type="entry name" value="TRANSMEMBRANE PROTEIN 19"/>
    <property type="match status" value="1"/>
</dbReference>
<dbReference type="Pfam" id="PF01940">
    <property type="entry name" value="DUF92"/>
    <property type="match status" value="1"/>
</dbReference>
<sequence>MEVDTMETLIRLFVSILIICVLALMIKKSRCLDNEGVIGSSIMGFILLYFCGFKYLILLLSFFILGVLVSRVGLEKKKAKKMDETCRSLKNVLANGLIPILFAILAIFGFNWALIGYISSIAAATSDTFSSELGILSNEKPRLITTFEVVEKGTDGAITIFGTLAGVLGAFLIGLFGYLLFGDIKIVLCGTAGGIAGNLADSLVGALFERKGILNNEHVNLIATIVGGIIGVLIYCTL</sequence>
<accession>Q58343</accession>
<proteinExistence type="inferred from homology"/>
<evidence type="ECO:0000255" key="1"/>
<evidence type="ECO:0000305" key="2"/>
<gene>
    <name type="ordered locus">MJ0933</name>
</gene>
<organism>
    <name type="scientific">Methanocaldococcus jannaschii (strain ATCC 43067 / DSM 2661 / JAL-1 / JCM 10045 / NBRC 100440)</name>
    <name type="common">Methanococcus jannaschii</name>
    <dbReference type="NCBI Taxonomy" id="243232"/>
    <lineage>
        <taxon>Archaea</taxon>
        <taxon>Methanobacteriati</taxon>
        <taxon>Methanobacteriota</taxon>
        <taxon>Methanomada group</taxon>
        <taxon>Methanococci</taxon>
        <taxon>Methanococcales</taxon>
        <taxon>Methanocaldococcaceae</taxon>
        <taxon>Methanocaldococcus</taxon>
    </lineage>
</organism>
<protein>
    <recommendedName>
        <fullName>Uncharacterized membrane protein MJ0933</fullName>
    </recommendedName>
</protein>
<name>Y933_METJA</name>
<keyword id="KW-1003">Cell membrane</keyword>
<keyword id="KW-0472">Membrane</keyword>
<keyword id="KW-1185">Reference proteome</keyword>
<keyword id="KW-0812">Transmembrane</keyword>
<keyword id="KW-1133">Transmembrane helix</keyword>
<feature type="chain" id="PRO_0000107111" description="Uncharacterized membrane protein MJ0933">
    <location>
        <begin position="1"/>
        <end position="238"/>
    </location>
</feature>
<feature type="transmembrane region" description="Helical" evidence="1">
    <location>
        <begin position="6"/>
        <end position="26"/>
    </location>
</feature>
<feature type="transmembrane region" description="Helical" evidence="1">
    <location>
        <begin position="45"/>
        <end position="65"/>
    </location>
</feature>
<feature type="transmembrane region" description="Helical" evidence="1">
    <location>
        <begin position="98"/>
        <end position="118"/>
    </location>
</feature>
<feature type="transmembrane region" description="Helical" evidence="1">
    <location>
        <begin position="160"/>
        <end position="180"/>
    </location>
</feature>
<feature type="transmembrane region" description="Helical" evidence="1">
    <location>
        <begin position="186"/>
        <end position="206"/>
    </location>
</feature>
<reference key="1">
    <citation type="journal article" date="1996" name="Science">
        <title>Complete genome sequence of the methanogenic archaeon, Methanococcus jannaschii.</title>
        <authorList>
            <person name="Bult C.J."/>
            <person name="White O."/>
            <person name="Olsen G.J."/>
            <person name="Zhou L."/>
            <person name="Fleischmann R.D."/>
            <person name="Sutton G.G."/>
            <person name="Blake J.A."/>
            <person name="FitzGerald L.M."/>
            <person name="Clayton R.A."/>
            <person name="Gocayne J.D."/>
            <person name="Kerlavage A.R."/>
            <person name="Dougherty B.A."/>
            <person name="Tomb J.-F."/>
            <person name="Adams M.D."/>
            <person name="Reich C.I."/>
            <person name="Overbeek R."/>
            <person name="Kirkness E.F."/>
            <person name="Weinstock K.G."/>
            <person name="Merrick J.M."/>
            <person name="Glodek A."/>
            <person name="Scott J.L."/>
            <person name="Geoghagen N.S.M."/>
            <person name="Weidman J.F."/>
            <person name="Fuhrmann J.L."/>
            <person name="Nguyen D."/>
            <person name="Utterback T.R."/>
            <person name="Kelley J.M."/>
            <person name="Peterson J.D."/>
            <person name="Sadow P.W."/>
            <person name="Hanna M.C."/>
            <person name="Cotton M.D."/>
            <person name="Roberts K.M."/>
            <person name="Hurst M.A."/>
            <person name="Kaine B.P."/>
            <person name="Borodovsky M."/>
            <person name="Klenk H.-P."/>
            <person name="Fraser C.M."/>
            <person name="Smith H.O."/>
            <person name="Woese C.R."/>
            <person name="Venter J.C."/>
        </authorList>
    </citation>
    <scope>NUCLEOTIDE SEQUENCE [LARGE SCALE GENOMIC DNA]</scope>
    <source>
        <strain>ATCC 43067 / DSM 2661 / JAL-1 / JCM 10045 / NBRC 100440</strain>
    </source>
</reference>
<comment type="subcellular location">
    <subcellularLocation>
        <location evidence="2">Cell membrane</location>
        <topology evidence="2">Multi-pass membrane protein</topology>
    </subcellularLocation>
</comment>
<comment type="similarity">
    <text evidence="2">Belongs to the TMEM19 family.</text>
</comment>